<comment type="function">
    <text evidence="1">Responsible for the transport of dicarboxylates such as succinate, fumarate, and malate from the periplasm across the membrane.</text>
</comment>
<comment type="subcellular location">
    <subcellularLocation>
        <location evidence="1">Cell inner membrane</location>
        <topology evidence="1">Multi-pass membrane protein</topology>
    </subcellularLocation>
</comment>
<comment type="similarity">
    <text evidence="1">Belongs to the dicarboxylate/amino acid:cation symporter (DAACS) (TC 2.A.23) family.</text>
</comment>
<reference key="1">
    <citation type="journal article" date="2006" name="Proc. Natl. Acad. Sci. U.S.A.">
        <title>Burkholderia xenovorans LB400 harbors a multi-replicon, 9.73-Mbp genome shaped for versatility.</title>
        <authorList>
            <person name="Chain P.S.G."/>
            <person name="Denef V.J."/>
            <person name="Konstantinidis K.T."/>
            <person name="Vergez L.M."/>
            <person name="Agullo L."/>
            <person name="Reyes V.L."/>
            <person name="Hauser L."/>
            <person name="Cordova M."/>
            <person name="Gomez L."/>
            <person name="Gonzalez M."/>
            <person name="Land M."/>
            <person name="Lao V."/>
            <person name="Larimer F."/>
            <person name="LiPuma J.J."/>
            <person name="Mahenthiralingam E."/>
            <person name="Malfatti S.A."/>
            <person name="Marx C.J."/>
            <person name="Parnell J.J."/>
            <person name="Ramette A."/>
            <person name="Richardson P."/>
            <person name="Seeger M."/>
            <person name="Smith D."/>
            <person name="Spilker T."/>
            <person name="Sul W.J."/>
            <person name="Tsoi T.V."/>
            <person name="Ulrich L.E."/>
            <person name="Zhulin I.B."/>
            <person name="Tiedje J.M."/>
        </authorList>
    </citation>
    <scope>NUCLEOTIDE SEQUENCE [LARGE SCALE GENOMIC DNA]</scope>
    <source>
        <strain>LB400</strain>
    </source>
</reference>
<feature type="chain" id="PRO_1000067441" description="C4-dicarboxylate transport protein">
    <location>
        <begin position="1"/>
        <end position="426"/>
    </location>
</feature>
<feature type="transmembrane region" description="Helical" evidence="1">
    <location>
        <begin position="8"/>
        <end position="28"/>
    </location>
</feature>
<feature type="transmembrane region" description="Helical" evidence="1">
    <location>
        <begin position="44"/>
        <end position="64"/>
    </location>
</feature>
<feature type="transmembrane region" description="Helical" evidence="1">
    <location>
        <begin position="78"/>
        <end position="98"/>
    </location>
</feature>
<feature type="transmembrane region" description="Helical" evidence="1">
    <location>
        <begin position="148"/>
        <end position="168"/>
    </location>
</feature>
<feature type="transmembrane region" description="Helical" evidence="1">
    <location>
        <begin position="173"/>
        <end position="193"/>
    </location>
</feature>
<feature type="transmembrane region" description="Helical" evidence="1">
    <location>
        <begin position="222"/>
        <end position="242"/>
    </location>
</feature>
<feature type="transmembrane region" description="Helical" evidence="1">
    <location>
        <begin position="297"/>
        <end position="317"/>
    </location>
</feature>
<feature type="transmembrane region" description="Helical" evidence="1">
    <location>
        <begin position="355"/>
        <end position="375"/>
    </location>
</feature>
<protein>
    <recommendedName>
        <fullName evidence="1">C4-dicarboxylate transport protein</fullName>
    </recommendedName>
</protein>
<name>DCTA_PARXL</name>
<gene>
    <name evidence="1" type="primary">dctA</name>
    <name type="ordered locus">Bxeno_A0265</name>
    <name type="ORF">Bxe_A4197</name>
</gene>
<sequence length="426" mass="44909">MKKPIHKVLYVQVIVAIIIGIGLGHFYPDLAVDMKPLGDGFIKLIKMVIGPIIFCTVVTGIAGMEDMKKVGRVGGKALLYFEIVSTFALVLGLIATHVLKPGVGFNIDPATLDGKAVASYAAKAHGQTTVDFLMHIIPDTLVSAFAQGEILQILLIALLFGAVLATAGEKGKVVTGFIDGLSHVLFGIVRIITKLAPIGAFGAMAFTIGKYGIGSLLPMLKLIGTFYLTSVVFVVVVLGIIARAVGFNILRFVAYIKEEMLIVLGTSSSEAALPQLMLKLERLGCSRSVVGLVVPTGYSFNLDGTNIYMTMAVLFIAQATNTDLTWTQQLTLLAVTMLTSKGASGVTGAGFITLAATLAVVPTIPLSGMVLILGIDRFMSECRALTNIVGNGVATVVVSAWEKELDRSKLNAALRGDVAIKEPAGV</sequence>
<proteinExistence type="inferred from homology"/>
<evidence type="ECO:0000255" key="1">
    <source>
        <dbReference type="HAMAP-Rule" id="MF_01300"/>
    </source>
</evidence>
<accession>Q146D6</accession>
<dbReference type="EMBL" id="CP000270">
    <property type="protein sequence ID" value="ABE28803.1"/>
    <property type="molecule type" value="Genomic_DNA"/>
</dbReference>
<dbReference type="RefSeq" id="WP_011486643.1">
    <property type="nucleotide sequence ID" value="NC_007951.1"/>
</dbReference>
<dbReference type="SMR" id="Q146D6"/>
<dbReference type="STRING" id="266265.Bxe_A4197"/>
<dbReference type="KEGG" id="bxb:DR64_1875"/>
<dbReference type="KEGG" id="bxe:Bxe_A4197"/>
<dbReference type="PATRIC" id="fig|266265.5.peg.279"/>
<dbReference type="eggNOG" id="COG1301">
    <property type="taxonomic scope" value="Bacteria"/>
</dbReference>
<dbReference type="OrthoDB" id="9766690at2"/>
<dbReference type="Proteomes" id="UP000001817">
    <property type="component" value="Chromosome 1"/>
</dbReference>
<dbReference type="GO" id="GO:0005886">
    <property type="term" value="C:plasma membrane"/>
    <property type="evidence" value="ECO:0007669"/>
    <property type="project" value="UniProtKB-SubCell"/>
</dbReference>
<dbReference type="GO" id="GO:0015138">
    <property type="term" value="F:fumarate transmembrane transporter activity"/>
    <property type="evidence" value="ECO:0007669"/>
    <property type="project" value="TreeGrafter"/>
</dbReference>
<dbReference type="GO" id="GO:0015366">
    <property type="term" value="F:malate:proton symporter activity"/>
    <property type="evidence" value="ECO:0007669"/>
    <property type="project" value="TreeGrafter"/>
</dbReference>
<dbReference type="GO" id="GO:0015141">
    <property type="term" value="F:succinate transmembrane transporter activity"/>
    <property type="evidence" value="ECO:0007669"/>
    <property type="project" value="TreeGrafter"/>
</dbReference>
<dbReference type="GO" id="GO:0070778">
    <property type="term" value="P:L-aspartate transmembrane transport"/>
    <property type="evidence" value="ECO:0007669"/>
    <property type="project" value="TreeGrafter"/>
</dbReference>
<dbReference type="FunFam" id="1.10.3860.10:FF:000001">
    <property type="entry name" value="C4-dicarboxylate transport protein"/>
    <property type="match status" value="1"/>
</dbReference>
<dbReference type="Gene3D" id="1.10.3860.10">
    <property type="entry name" value="Sodium:dicarboxylate symporter"/>
    <property type="match status" value="1"/>
</dbReference>
<dbReference type="HAMAP" id="MF_01300">
    <property type="entry name" value="C4_dicarb_transport"/>
    <property type="match status" value="1"/>
</dbReference>
<dbReference type="InterPro" id="IPR023954">
    <property type="entry name" value="C4_dicarb_transport"/>
</dbReference>
<dbReference type="InterPro" id="IPR001991">
    <property type="entry name" value="Na-dicarboxylate_symporter"/>
</dbReference>
<dbReference type="InterPro" id="IPR018107">
    <property type="entry name" value="Na-dicarboxylate_symporter_CS"/>
</dbReference>
<dbReference type="InterPro" id="IPR036458">
    <property type="entry name" value="Na:dicarbo_symporter_sf"/>
</dbReference>
<dbReference type="NCBIfam" id="NF002461">
    <property type="entry name" value="PRK01663.1"/>
    <property type="match status" value="1"/>
</dbReference>
<dbReference type="NCBIfam" id="NF009587">
    <property type="entry name" value="PRK13027.1"/>
    <property type="match status" value="1"/>
</dbReference>
<dbReference type="PANTHER" id="PTHR42865:SF1">
    <property type="entry name" value="AEROBIC C4-DICARBOXYLATE TRANSPORT PROTEIN"/>
    <property type="match status" value="1"/>
</dbReference>
<dbReference type="PANTHER" id="PTHR42865">
    <property type="entry name" value="PROTON/GLUTAMATE-ASPARTATE SYMPORTER"/>
    <property type="match status" value="1"/>
</dbReference>
<dbReference type="Pfam" id="PF00375">
    <property type="entry name" value="SDF"/>
    <property type="match status" value="1"/>
</dbReference>
<dbReference type="PRINTS" id="PR00173">
    <property type="entry name" value="EDTRNSPORT"/>
</dbReference>
<dbReference type="SUPFAM" id="SSF118215">
    <property type="entry name" value="Proton glutamate symport protein"/>
    <property type="match status" value="1"/>
</dbReference>
<dbReference type="PROSITE" id="PS00713">
    <property type="entry name" value="NA_DICARBOXYL_SYMP_1"/>
    <property type="match status" value="1"/>
</dbReference>
<dbReference type="PROSITE" id="PS00714">
    <property type="entry name" value="NA_DICARBOXYL_SYMP_2"/>
    <property type="match status" value="1"/>
</dbReference>
<organism>
    <name type="scientific">Paraburkholderia xenovorans (strain LB400)</name>
    <dbReference type="NCBI Taxonomy" id="266265"/>
    <lineage>
        <taxon>Bacteria</taxon>
        <taxon>Pseudomonadati</taxon>
        <taxon>Pseudomonadota</taxon>
        <taxon>Betaproteobacteria</taxon>
        <taxon>Burkholderiales</taxon>
        <taxon>Burkholderiaceae</taxon>
        <taxon>Paraburkholderia</taxon>
    </lineage>
</organism>
<keyword id="KW-0997">Cell inner membrane</keyword>
<keyword id="KW-1003">Cell membrane</keyword>
<keyword id="KW-0472">Membrane</keyword>
<keyword id="KW-1185">Reference proteome</keyword>
<keyword id="KW-0769">Symport</keyword>
<keyword id="KW-0812">Transmembrane</keyword>
<keyword id="KW-1133">Transmembrane helix</keyword>
<keyword id="KW-0813">Transport</keyword>